<comment type="catalytic activity">
    <reaction evidence="1">
        <text>tRNA(Gly) + glycine + ATP = glycyl-tRNA(Gly) + AMP + diphosphate</text>
        <dbReference type="Rhea" id="RHEA:16013"/>
        <dbReference type="Rhea" id="RHEA-COMP:9664"/>
        <dbReference type="Rhea" id="RHEA-COMP:9683"/>
        <dbReference type="ChEBI" id="CHEBI:30616"/>
        <dbReference type="ChEBI" id="CHEBI:33019"/>
        <dbReference type="ChEBI" id="CHEBI:57305"/>
        <dbReference type="ChEBI" id="CHEBI:78442"/>
        <dbReference type="ChEBI" id="CHEBI:78522"/>
        <dbReference type="ChEBI" id="CHEBI:456215"/>
        <dbReference type="EC" id="6.1.1.14"/>
    </reaction>
</comment>
<comment type="subunit">
    <text evidence="1">Tetramer of two alpha and two beta subunits.</text>
</comment>
<comment type="subcellular location">
    <subcellularLocation>
        <location evidence="1">Cytoplasm</location>
    </subcellularLocation>
</comment>
<comment type="similarity">
    <text evidence="1">Belongs to the class-II aminoacyl-tRNA synthetase family.</text>
</comment>
<accession>B4U1J1</accession>
<gene>
    <name evidence="1" type="primary">glyQ</name>
    <name type="ordered locus">Sez_0486</name>
</gene>
<dbReference type="EC" id="6.1.1.14" evidence="1"/>
<dbReference type="EMBL" id="CP001129">
    <property type="protein sequence ID" value="ACG61858.1"/>
    <property type="molecule type" value="Genomic_DNA"/>
</dbReference>
<dbReference type="RefSeq" id="WP_012515134.1">
    <property type="nucleotide sequence ID" value="NC_011134.1"/>
</dbReference>
<dbReference type="SMR" id="B4U1J1"/>
<dbReference type="KEGG" id="sez:Sez_0486"/>
<dbReference type="HOGENOM" id="CLU_057066_1_0_9"/>
<dbReference type="Proteomes" id="UP000001873">
    <property type="component" value="Chromosome"/>
</dbReference>
<dbReference type="GO" id="GO:0005829">
    <property type="term" value="C:cytosol"/>
    <property type="evidence" value="ECO:0007669"/>
    <property type="project" value="TreeGrafter"/>
</dbReference>
<dbReference type="GO" id="GO:0005524">
    <property type="term" value="F:ATP binding"/>
    <property type="evidence" value="ECO:0007669"/>
    <property type="project" value="UniProtKB-UniRule"/>
</dbReference>
<dbReference type="GO" id="GO:0140096">
    <property type="term" value="F:catalytic activity, acting on a protein"/>
    <property type="evidence" value="ECO:0007669"/>
    <property type="project" value="UniProtKB-ARBA"/>
</dbReference>
<dbReference type="GO" id="GO:0004820">
    <property type="term" value="F:glycine-tRNA ligase activity"/>
    <property type="evidence" value="ECO:0007669"/>
    <property type="project" value="UniProtKB-UniRule"/>
</dbReference>
<dbReference type="GO" id="GO:0016740">
    <property type="term" value="F:transferase activity"/>
    <property type="evidence" value="ECO:0007669"/>
    <property type="project" value="UniProtKB-ARBA"/>
</dbReference>
<dbReference type="GO" id="GO:0006426">
    <property type="term" value="P:glycyl-tRNA aminoacylation"/>
    <property type="evidence" value="ECO:0007669"/>
    <property type="project" value="UniProtKB-UniRule"/>
</dbReference>
<dbReference type="CDD" id="cd00733">
    <property type="entry name" value="GlyRS_alpha_core"/>
    <property type="match status" value="1"/>
</dbReference>
<dbReference type="FunFam" id="3.30.930.10:FF:000006">
    <property type="entry name" value="Glycine--tRNA ligase alpha subunit"/>
    <property type="match status" value="1"/>
</dbReference>
<dbReference type="Gene3D" id="3.30.930.10">
    <property type="entry name" value="Bira Bifunctional Protein, Domain 2"/>
    <property type="match status" value="1"/>
</dbReference>
<dbReference type="Gene3D" id="1.20.58.180">
    <property type="entry name" value="Class II aaRS and biotin synthetases, domain 2"/>
    <property type="match status" value="1"/>
</dbReference>
<dbReference type="HAMAP" id="MF_00254">
    <property type="entry name" value="Gly_tRNA_synth_alpha"/>
    <property type="match status" value="1"/>
</dbReference>
<dbReference type="InterPro" id="IPR045864">
    <property type="entry name" value="aa-tRNA-synth_II/BPL/LPL"/>
</dbReference>
<dbReference type="InterPro" id="IPR006194">
    <property type="entry name" value="Gly-tRNA-synth_heterodimer"/>
</dbReference>
<dbReference type="InterPro" id="IPR002310">
    <property type="entry name" value="Gly-tRNA_ligase_asu"/>
</dbReference>
<dbReference type="NCBIfam" id="TIGR00388">
    <property type="entry name" value="glyQ"/>
    <property type="match status" value="1"/>
</dbReference>
<dbReference type="NCBIfam" id="NF006827">
    <property type="entry name" value="PRK09348.1"/>
    <property type="match status" value="1"/>
</dbReference>
<dbReference type="PANTHER" id="PTHR30075:SF2">
    <property type="entry name" value="GLYCINE--TRNA LIGASE, CHLOROPLASTIC_MITOCHONDRIAL 2"/>
    <property type="match status" value="1"/>
</dbReference>
<dbReference type="PANTHER" id="PTHR30075">
    <property type="entry name" value="GLYCYL-TRNA SYNTHETASE"/>
    <property type="match status" value="1"/>
</dbReference>
<dbReference type="Pfam" id="PF02091">
    <property type="entry name" value="tRNA-synt_2e"/>
    <property type="match status" value="1"/>
</dbReference>
<dbReference type="PRINTS" id="PR01044">
    <property type="entry name" value="TRNASYNTHGA"/>
</dbReference>
<dbReference type="SUPFAM" id="SSF55681">
    <property type="entry name" value="Class II aaRS and biotin synthetases"/>
    <property type="match status" value="1"/>
</dbReference>
<dbReference type="PROSITE" id="PS50861">
    <property type="entry name" value="AA_TRNA_LIGASE_II_GLYAB"/>
    <property type="match status" value="1"/>
</dbReference>
<name>SYGA_STREM</name>
<organism>
    <name type="scientific">Streptococcus equi subsp. zooepidemicus (strain MGCS10565)</name>
    <dbReference type="NCBI Taxonomy" id="552526"/>
    <lineage>
        <taxon>Bacteria</taxon>
        <taxon>Bacillati</taxon>
        <taxon>Bacillota</taxon>
        <taxon>Bacilli</taxon>
        <taxon>Lactobacillales</taxon>
        <taxon>Streptococcaceae</taxon>
        <taxon>Streptococcus</taxon>
    </lineage>
</organism>
<proteinExistence type="inferred from homology"/>
<evidence type="ECO:0000255" key="1">
    <source>
        <dbReference type="HAMAP-Rule" id="MF_00254"/>
    </source>
</evidence>
<reference key="1">
    <citation type="journal article" date="2008" name="PLoS ONE">
        <title>Genome sequence of a lancefield group C Streptococcus zooepidemicus strain causing epidemic nephritis: new information about an old disease.</title>
        <authorList>
            <person name="Beres S.B."/>
            <person name="Sesso R."/>
            <person name="Pinto S.W.L."/>
            <person name="Hoe N.P."/>
            <person name="Porcella S.F."/>
            <person name="Deleo F.R."/>
            <person name="Musser J.M."/>
        </authorList>
    </citation>
    <scope>NUCLEOTIDE SEQUENCE [LARGE SCALE GENOMIC DNA]</scope>
    <source>
        <strain>MGCS10565</strain>
    </source>
</reference>
<keyword id="KW-0030">Aminoacyl-tRNA synthetase</keyword>
<keyword id="KW-0067">ATP-binding</keyword>
<keyword id="KW-0963">Cytoplasm</keyword>
<keyword id="KW-0436">Ligase</keyword>
<keyword id="KW-0547">Nucleotide-binding</keyword>
<keyword id="KW-0648">Protein biosynthesis</keyword>
<sequence>MSNKLTFQEIILTLQQYWNDQGCMLMQAYDNEKGAGTMSPYTFLRAIGPEPWNAAYVEPSRRPADGRYGENPNRLYQHHQFQVVMKPSPSNIQELYLQSLERLGIDPLEHDIRFVEDNWENPSTGSAGLGWEVWLDGMEITQFTYFQQVGGLATSPVTAEVTYGLERLASYIQEVDSVYDIEWAPGVKYGEIFLQPEYEHSKYSFEVSNQDMLLENFETFEKEAERALAQGLVHPAYDYVLKCSHTFNLLDARGAVSVTERAGYIARIRHLARSVAKTFVAERKKLGFPLLDDASRVALLAED</sequence>
<feature type="chain" id="PRO_1000101233" description="Glycine--tRNA ligase alpha subunit">
    <location>
        <begin position="1"/>
        <end position="303"/>
    </location>
</feature>
<protein>
    <recommendedName>
        <fullName evidence="1">Glycine--tRNA ligase alpha subunit</fullName>
        <ecNumber evidence="1">6.1.1.14</ecNumber>
    </recommendedName>
    <alternativeName>
        <fullName evidence="1">Glycyl-tRNA synthetase alpha subunit</fullName>
        <shortName evidence="1">GlyRS</shortName>
    </alternativeName>
</protein>